<name>C71B6_ARATH</name>
<dbReference type="EC" id="1.14.-.-"/>
<dbReference type="EMBL" id="D78604">
    <property type="protein sequence ID" value="BAA28536.1"/>
    <property type="molecule type" value="mRNA"/>
</dbReference>
<dbReference type="EMBL" id="AC005967">
    <property type="protein sequence ID" value="AAD03379.1"/>
    <property type="molecule type" value="Genomic_DNA"/>
</dbReference>
<dbReference type="EMBL" id="CP002685">
    <property type="protein sequence ID" value="AEC07536.1"/>
    <property type="molecule type" value="Genomic_DNA"/>
</dbReference>
<dbReference type="EMBL" id="AY054534">
    <property type="protein sequence ID" value="AAK96725.1"/>
    <property type="molecule type" value="mRNA"/>
</dbReference>
<dbReference type="EMBL" id="AY064632">
    <property type="protein sequence ID" value="AAL47345.1"/>
    <property type="molecule type" value="mRNA"/>
</dbReference>
<dbReference type="PIR" id="T52172">
    <property type="entry name" value="T52172"/>
</dbReference>
<dbReference type="RefSeq" id="NP_179995.1">
    <property type="nucleotide sequence ID" value="NM_127979.3"/>
</dbReference>
<dbReference type="SMR" id="O65787"/>
<dbReference type="BioGRID" id="2304">
    <property type="interactions" value="18"/>
</dbReference>
<dbReference type="FunCoup" id="O65787">
    <property type="interactions" value="478"/>
</dbReference>
<dbReference type="IntAct" id="O65787">
    <property type="interactions" value="20"/>
</dbReference>
<dbReference type="STRING" id="3702.O65787"/>
<dbReference type="PaxDb" id="3702-AT2G24180.1"/>
<dbReference type="ProteomicsDB" id="240495"/>
<dbReference type="EnsemblPlants" id="AT2G24180.1">
    <property type="protein sequence ID" value="AT2G24180.1"/>
    <property type="gene ID" value="AT2G24180"/>
</dbReference>
<dbReference type="GeneID" id="816952"/>
<dbReference type="Gramene" id="AT2G24180.1">
    <property type="protein sequence ID" value="AT2G24180.1"/>
    <property type="gene ID" value="AT2G24180"/>
</dbReference>
<dbReference type="KEGG" id="ath:AT2G24180"/>
<dbReference type="Araport" id="AT2G24180"/>
<dbReference type="TAIR" id="AT2G24180">
    <property type="gene designation" value="CYP71B6"/>
</dbReference>
<dbReference type="eggNOG" id="KOG0156">
    <property type="taxonomic scope" value="Eukaryota"/>
</dbReference>
<dbReference type="HOGENOM" id="CLU_001570_4_1_1"/>
<dbReference type="InParanoid" id="O65787"/>
<dbReference type="OMA" id="HIRAIIM"/>
<dbReference type="PhylomeDB" id="O65787"/>
<dbReference type="BioCyc" id="ARA:AT2G24180-MONOMER"/>
<dbReference type="PRO" id="PR:O65787"/>
<dbReference type="Proteomes" id="UP000006548">
    <property type="component" value="Chromosome 2"/>
</dbReference>
<dbReference type="ExpressionAtlas" id="O65787">
    <property type="expression patterns" value="baseline and differential"/>
</dbReference>
<dbReference type="GO" id="GO:0005783">
    <property type="term" value="C:endoplasmic reticulum"/>
    <property type="evidence" value="ECO:0007005"/>
    <property type="project" value="TAIR"/>
</dbReference>
<dbReference type="GO" id="GO:0005794">
    <property type="term" value="C:Golgi apparatus"/>
    <property type="evidence" value="ECO:0007005"/>
    <property type="project" value="TAIR"/>
</dbReference>
<dbReference type="GO" id="GO:0016020">
    <property type="term" value="C:membrane"/>
    <property type="evidence" value="ECO:0007669"/>
    <property type="project" value="UniProtKB-SubCell"/>
</dbReference>
<dbReference type="GO" id="GO:0005739">
    <property type="term" value="C:mitochondrion"/>
    <property type="evidence" value="ECO:0007005"/>
    <property type="project" value="TAIR"/>
</dbReference>
<dbReference type="GO" id="GO:0005773">
    <property type="term" value="C:vacuole"/>
    <property type="evidence" value="ECO:0007005"/>
    <property type="project" value="TAIR"/>
</dbReference>
<dbReference type="GO" id="GO:0020037">
    <property type="term" value="F:heme binding"/>
    <property type="evidence" value="ECO:0007669"/>
    <property type="project" value="InterPro"/>
</dbReference>
<dbReference type="GO" id="GO:0005506">
    <property type="term" value="F:iron ion binding"/>
    <property type="evidence" value="ECO:0007669"/>
    <property type="project" value="InterPro"/>
</dbReference>
<dbReference type="GO" id="GO:0004497">
    <property type="term" value="F:monooxygenase activity"/>
    <property type="evidence" value="ECO:0000314"/>
    <property type="project" value="TAIR"/>
</dbReference>
<dbReference type="GO" id="GO:0016705">
    <property type="term" value="F:oxidoreductase activity, acting on paired donors, with incorporation or reduction of molecular oxygen"/>
    <property type="evidence" value="ECO:0007669"/>
    <property type="project" value="InterPro"/>
</dbReference>
<dbReference type="GO" id="GO:0042430">
    <property type="term" value="P:indole-containing compound metabolic process"/>
    <property type="evidence" value="ECO:0000314"/>
    <property type="project" value="TAIR"/>
</dbReference>
<dbReference type="CDD" id="cd11072">
    <property type="entry name" value="CYP71-like"/>
    <property type="match status" value="1"/>
</dbReference>
<dbReference type="FunFam" id="1.10.630.10:FF:000011">
    <property type="entry name" value="Cytochrome P450 83B1"/>
    <property type="match status" value="1"/>
</dbReference>
<dbReference type="Gene3D" id="1.10.630.10">
    <property type="entry name" value="Cytochrome P450"/>
    <property type="match status" value="1"/>
</dbReference>
<dbReference type="InterPro" id="IPR001128">
    <property type="entry name" value="Cyt_P450"/>
</dbReference>
<dbReference type="InterPro" id="IPR017972">
    <property type="entry name" value="Cyt_P450_CS"/>
</dbReference>
<dbReference type="InterPro" id="IPR002401">
    <property type="entry name" value="Cyt_P450_E_grp-I"/>
</dbReference>
<dbReference type="InterPro" id="IPR036396">
    <property type="entry name" value="Cyt_P450_sf"/>
</dbReference>
<dbReference type="PANTHER" id="PTHR47955:SF19">
    <property type="entry name" value="CYTOCHROME P450 71A9-LIKE ISOFORM X1"/>
    <property type="match status" value="1"/>
</dbReference>
<dbReference type="PANTHER" id="PTHR47955">
    <property type="entry name" value="CYTOCHROME P450 FAMILY 71 PROTEIN"/>
    <property type="match status" value="1"/>
</dbReference>
<dbReference type="Pfam" id="PF00067">
    <property type="entry name" value="p450"/>
    <property type="match status" value="1"/>
</dbReference>
<dbReference type="PRINTS" id="PR00463">
    <property type="entry name" value="EP450I"/>
</dbReference>
<dbReference type="PRINTS" id="PR00385">
    <property type="entry name" value="P450"/>
</dbReference>
<dbReference type="SUPFAM" id="SSF48264">
    <property type="entry name" value="Cytochrome P450"/>
    <property type="match status" value="1"/>
</dbReference>
<dbReference type="PROSITE" id="PS00086">
    <property type="entry name" value="CYTOCHROME_P450"/>
    <property type="match status" value="1"/>
</dbReference>
<proteinExistence type="evidence at transcript level"/>
<protein>
    <recommendedName>
        <fullName>Cytochrome P450 71B6</fullName>
        <ecNumber>1.14.-.-</ecNumber>
    </recommendedName>
</protein>
<keyword id="KW-0349">Heme</keyword>
<keyword id="KW-0408">Iron</keyword>
<keyword id="KW-0472">Membrane</keyword>
<keyword id="KW-0479">Metal-binding</keyword>
<keyword id="KW-0503">Monooxygenase</keyword>
<keyword id="KW-0560">Oxidoreductase</keyword>
<keyword id="KW-1185">Reference proteome</keyword>
<keyword id="KW-0812">Transmembrane</keyword>
<keyword id="KW-1133">Transmembrane helix</keyword>
<comment type="cofactor">
    <cofactor evidence="1">
        <name>heme</name>
        <dbReference type="ChEBI" id="CHEBI:30413"/>
    </cofactor>
</comment>
<comment type="subcellular location">
    <subcellularLocation>
        <location evidence="3">Membrane</location>
        <topology evidence="3">Single-pass membrane protein</topology>
    </subcellularLocation>
</comment>
<comment type="similarity">
    <text evidence="3">Belongs to the cytochrome P450 family.</text>
</comment>
<organism>
    <name type="scientific">Arabidopsis thaliana</name>
    <name type="common">Mouse-ear cress</name>
    <dbReference type="NCBI Taxonomy" id="3702"/>
    <lineage>
        <taxon>Eukaryota</taxon>
        <taxon>Viridiplantae</taxon>
        <taxon>Streptophyta</taxon>
        <taxon>Embryophyta</taxon>
        <taxon>Tracheophyta</taxon>
        <taxon>Spermatophyta</taxon>
        <taxon>Magnoliopsida</taxon>
        <taxon>eudicotyledons</taxon>
        <taxon>Gunneridae</taxon>
        <taxon>Pentapetalae</taxon>
        <taxon>rosids</taxon>
        <taxon>malvids</taxon>
        <taxon>Brassicales</taxon>
        <taxon>Brassicaceae</taxon>
        <taxon>Camelineae</taxon>
        <taxon>Arabidopsis</taxon>
    </lineage>
</organism>
<evidence type="ECO:0000250" key="1"/>
<evidence type="ECO:0000255" key="2"/>
<evidence type="ECO:0000305" key="3"/>
<accession>O65787</accession>
<reference key="1">
    <citation type="journal article" date="1998" name="Plant Mol. Biol.">
        <title>Cytochrome P450 superfamily in Arabidopsis thaliana: isolation of cDNAs, differential expression, and RFLP mapping of multiple cytochromes P450.</title>
        <authorList>
            <person name="Mizutani M."/>
            <person name="Ward E."/>
            <person name="Ohta D."/>
        </authorList>
    </citation>
    <scope>NUCLEOTIDE SEQUENCE [MRNA]</scope>
    <source>
        <strain>cv. Columbia</strain>
        <tissue>Seedling</tissue>
    </source>
</reference>
<reference key="2">
    <citation type="journal article" date="1999" name="Nature">
        <title>Sequence and analysis of chromosome 2 of the plant Arabidopsis thaliana.</title>
        <authorList>
            <person name="Lin X."/>
            <person name="Kaul S."/>
            <person name="Rounsley S.D."/>
            <person name="Shea T.P."/>
            <person name="Benito M.-I."/>
            <person name="Town C.D."/>
            <person name="Fujii C.Y."/>
            <person name="Mason T.M."/>
            <person name="Bowman C.L."/>
            <person name="Barnstead M.E."/>
            <person name="Feldblyum T.V."/>
            <person name="Buell C.R."/>
            <person name="Ketchum K.A."/>
            <person name="Lee J.J."/>
            <person name="Ronning C.M."/>
            <person name="Koo H.L."/>
            <person name="Moffat K.S."/>
            <person name="Cronin L.A."/>
            <person name="Shen M."/>
            <person name="Pai G."/>
            <person name="Van Aken S."/>
            <person name="Umayam L."/>
            <person name="Tallon L.J."/>
            <person name="Gill J.E."/>
            <person name="Adams M.D."/>
            <person name="Carrera A.J."/>
            <person name="Creasy T.H."/>
            <person name="Goodman H.M."/>
            <person name="Somerville C.R."/>
            <person name="Copenhaver G.P."/>
            <person name="Preuss D."/>
            <person name="Nierman W.C."/>
            <person name="White O."/>
            <person name="Eisen J.A."/>
            <person name="Salzberg S.L."/>
            <person name="Fraser C.M."/>
            <person name="Venter J.C."/>
        </authorList>
    </citation>
    <scope>NUCLEOTIDE SEQUENCE [LARGE SCALE GENOMIC DNA]</scope>
    <source>
        <strain>cv. Columbia</strain>
    </source>
</reference>
<reference key="3">
    <citation type="journal article" date="2017" name="Plant J.">
        <title>Araport11: a complete reannotation of the Arabidopsis thaliana reference genome.</title>
        <authorList>
            <person name="Cheng C.Y."/>
            <person name="Krishnakumar V."/>
            <person name="Chan A.P."/>
            <person name="Thibaud-Nissen F."/>
            <person name="Schobel S."/>
            <person name="Town C.D."/>
        </authorList>
    </citation>
    <scope>GENOME REANNOTATION</scope>
    <source>
        <strain>cv. Columbia</strain>
    </source>
</reference>
<reference key="4">
    <citation type="journal article" date="2003" name="Science">
        <title>Empirical analysis of transcriptional activity in the Arabidopsis genome.</title>
        <authorList>
            <person name="Yamada K."/>
            <person name="Lim J."/>
            <person name="Dale J.M."/>
            <person name="Chen H."/>
            <person name="Shinn P."/>
            <person name="Palm C.J."/>
            <person name="Southwick A.M."/>
            <person name="Wu H.C."/>
            <person name="Kim C.J."/>
            <person name="Nguyen M."/>
            <person name="Pham P.K."/>
            <person name="Cheuk R.F."/>
            <person name="Karlin-Newmann G."/>
            <person name="Liu S.X."/>
            <person name="Lam B."/>
            <person name="Sakano H."/>
            <person name="Wu T."/>
            <person name="Yu G."/>
            <person name="Miranda M."/>
            <person name="Quach H.L."/>
            <person name="Tripp M."/>
            <person name="Chang C.H."/>
            <person name="Lee J.M."/>
            <person name="Toriumi M.J."/>
            <person name="Chan M.M."/>
            <person name="Tang C.C."/>
            <person name="Onodera C.S."/>
            <person name="Deng J.M."/>
            <person name="Akiyama K."/>
            <person name="Ansari Y."/>
            <person name="Arakawa T."/>
            <person name="Banh J."/>
            <person name="Banno F."/>
            <person name="Bowser L."/>
            <person name="Brooks S.Y."/>
            <person name="Carninci P."/>
            <person name="Chao Q."/>
            <person name="Choy N."/>
            <person name="Enju A."/>
            <person name="Goldsmith A.D."/>
            <person name="Gurjal M."/>
            <person name="Hansen N.F."/>
            <person name="Hayashizaki Y."/>
            <person name="Johnson-Hopson C."/>
            <person name="Hsuan V.W."/>
            <person name="Iida K."/>
            <person name="Karnes M."/>
            <person name="Khan S."/>
            <person name="Koesema E."/>
            <person name="Ishida J."/>
            <person name="Jiang P.X."/>
            <person name="Jones T."/>
            <person name="Kawai J."/>
            <person name="Kamiya A."/>
            <person name="Meyers C."/>
            <person name="Nakajima M."/>
            <person name="Narusaka M."/>
            <person name="Seki M."/>
            <person name="Sakurai T."/>
            <person name="Satou M."/>
            <person name="Tamse R."/>
            <person name="Vaysberg M."/>
            <person name="Wallender E.K."/>
            <person name="Wong C."/>
            <person name="Yamamura Y."/>
            <person name="Yuan S."/>
            <person name="Shinozaki K."/>
            <person name="Davis R.W."/>
            <person name="Theologis A."/>
            <person name="Ecker J.R."/>
        </authorList>
    </citation>
    <scope>NUCLEOTIDE SEQUENCE [LARGE SCALE MRNA]</scope>
    <source>
        <strain>cv. Columbia</strain>
    </source>
</reference>
<feature type="chain" id="PRO_0000052084" description="Cytochrome P450 71B6">
    <location>
        <begin position="1"/>
        <end position="503"/>
    </location>
</feature>
<feature type="transmembrane region" description="Helical" evidence="2">
    <location>
        <begin position="10"/>
        <end position="30"/>
    </location>
</feature>
<feature type="binding site" description="axial binding residue" evidence="1">
    <location>
        <position position="446"/>
    </location>
    <ligand>
        <name>heme</name>
        <dbReference type="ChEBI" id="CHEBI:30413"/>
    </ligand>
    <ligandPart>
        <name>Fe</name>
        <dbReference type="ChEBI" id="CHEBI:18248"/>
    </ligandPart>
</feature>
<gene>
    <name type="primary">CYP71B6</name>
    <name type="ordered locus">At2g24180</name>
    <name type="ORF">F27D4.9</name>
</gene>
<sequence length="503" mass="57009">MSLFSFPISTELLPWLLLLLIPPLLIFFLLRSPKNLPPGPPRLPILGNIHQLGSLPHRSLRDLSLKYGPVITVYLGSVRTVVVHSPETAEEVLKLHDSECCTRPKLSITKSFFYDGLGLGFTKWGDYYRDVRKLCVLELFSVKRANSFRNIREEELSRLVNSFSDSASSGSSVDLTANLAKFVASFTCRMAFGLSFQGSGMDNETFLELFTEANRVIGKFAAADIFPGFGWILDRISGLDSSRRKSFQDLDTFYQKAIVDHREKKKTEDREDLIDVLLKLQSQETKLGSSRITDTHIRAIIMDLFVAGVDTSVITLDWTMAELSRHPRVMKKVQAEIREHVGDKGIVTYDDLEALVYMKMVIKETWRLHAPSPILIPREAMTNFKIKGYDIYPGTRIHVNAWAIGRNPDVWKDPDEFIPERFVDSNVETKGTSFELLPFGSGRRGCPAMYVGLSTVEYTLANLLYHFDWKATEEVSVEEAPGLTSHRKHPLHLVPVNVINRKL</sequence>